<evidence type="ECO:0000250" key="1"/>
<evidence type="ECO:0000250" key="2">
    <source>
        <dbReference type="UniProtKB" id="B4XC07"/>
    </source>
</evidence>
<evidence type="ECO:0000250" key="3">
    <source>
        <dbReference type="UniProtKB" id="Q99036"/>
    </source>
</evidence>
<evidence type="ECO:0000255" key="4"/>
<evidence type="ECO:0000305" key="5"/>
<comment type="function">
    <text evidence="1">Endo-1,4-mannanase, a crucial enzyme for depolymerization of seed galactomannans and wood galactoglucomannans.</text>
</comment>
<comment type="catalytic activity">
    <reaction>
        <text>Random hydrolysis of (1-&gt;4)-beta-D-mannosidic linkages in mannans, galactomannans and glucomannans.</text>
        <dbReference type="EC" id="3.2.1.78"/>
    </reaction>
</comment>
<comment type="subcellular location">
    <subcellularLocation>
        <location evidence="1">Secreted</location>
    </subcellularLocation>
</comment>
<comment type="similarity">
    <text evidence="5">Belongs to the glycosyl hydrolase 5 (cellulase A) family.</text>
</comment>
<feature type="signal peptide" evidence="4">
    <location>
        <begin position="1"/>
        <end position="18"/>
    </location>
</feature>
<feature type="chain" id="PRO_0000393701" description="Probable mannan endo-1,4-beta-mannosidase A">
    <location>
        <begin position="19"/>
        <end position="360"/>
    </location>
</feature>
<feature type="active site" description="Proton donor" evidence="3">
    <location>
        <position position="179"/>
    </location>
</feature>
<feature type="active site" description="Nucleophile" evidence="3">
    <location>
        <position position="287"/>
    </location>
</feature>
<feature type="binding site" evidence="2">
    <location>
        <position position="142"/>
    </location>
    <ligand>
        <name>substrate</name>
    </ligand>
</feature>
<feature type="binding site" evidence="2">
    <location>
        <position position="178"/>
    </location>
    <ligand>
        <name>substrate</name>
    </ligand>
</feature>
<feature type="binding site" evidence="2">
    <location>
        <position position="254"/>
    </location>
    <ligand>
        <name>substrate</name>
    </ligand>
</feature>
<feature type="binding site" evidence="2">
    <location>
        <position position="317"/>
    </location>
    <ligand>
        <name>substrate</name>
    </ligand>
</feature>
<feature type="glycosylation site" description="N-linked (GlcNAc...) asparagine" evidence="4">
    <location>
        <position position="307"/>
    </location>
</feature>
<protein>
    <recommendedName>
        <fullName>Probable mannan endo-1,4-beta-mannosidase A</fullName>
        <ecNumber>3.2.1.78</ecNumber>
    </recommendedName>
    <alternativeName>
        <fullName>Endo-beta-1,4-mannanase A</fullName>
    </alternativeName>
</protein>
<name>MANA_ASPCL</name>
<organism>
    <name type="scientific">Aspergillus clavatus (strain ATCC 1007 / CBS 513.65 / DSM 816 / NCTC 3887 / NRRL 1 / QM 1276 / 107)</name>
    <dbReference type="NCBI Taxonomy" id="344612"/>
    <lineage>
        <taxon>Eukaryota</taxon>
        <taxon>Fungi</taxon>
        <taxon>Dikarya</taxon>
        <taxon>Ascomycota</taxon>
        <taxon>Pezizomycotina</taxon>
        <taxon>Eurotiomycetes</taxon>
        <taxon>Eurotiomycetidae</taxon>
        <taxon>Eurotiales</taxon>
        <taxon>Aspergillaceae</taxon>
        <taxon>Aspergillus</taxon>
        <taxon>Aspergillus subgen. Fumigati</taxon>
    </lineage>
</organism>
<sequence length="360" mass="39457">MKLSQILTFASLLSGALAAPGKPHGKPGFASTSGLQFSIDGQTGYFAGSNSYWIGFLTNKADVDIGFNDVNTVPGEGTVYYQLHANGKSTINTGANGLQRMDYVVKSAEKHGIKLIINFVNNWDDYGGMNAYVKGYGAADHNDFYSNAKIQKAYRQYIRAVVSRYTKSDAVFAWELANEPRCKGCDTDVLYDWIKSTSEYIKSLDAKHMVCIGDEGFGLETLSDGSYPFTYVEGSDFARNLAIPTIDFGTFHLYPDSWGTSHEWGNLWTQAHGAACQAAGKPCLFEEYGVTSDHCALETPWQKTSLNTTGVSADLYWQYGDTLSSGPSPNDGHTVYYGTDDFKCMVTDHVAAIKAKQGWV</sequence>
<gene>
    <name type="primary">manA</name>
    <name type="synonym">man1</name>
    <name type="ORF">ACLA_066420</name>
</gene>
<keyword id="KW-0119">Carbohydrate metabolism</keyword>
<keyword id="KW-0325">Glycoprotein</keyword>
<keyword id="KW-0326">Glycosidase</keyword>
<keyword id="KW-0378">Hydrolase</keyword>
<keyword id="KW-1185">Reference proteome</keyword>
<keyword id="KW-0964">Secreted</keyword>
<keyword id="KW-0732">Signal</keyword>
<dbReference type="EC" id="3.2.1.78"/>
<dbReference type="EMBL" id="DS027053">
    <property type="protein sequence ID" value="EAW11006.1"/>
    <property type="molecule type" value="Genomic_DNA"/>
</dbReference>
<dbReference type="RefSeq" id="XP_001272432.1">
    <property type="nucleotide sequence ID" value="XM_001272431.1"/>
</dbReference>
<dbReference type="SMR" id="A1CGC6"/>
<dbReference type="STRING" id="344612.A1CGC6"/>
<dbReference type="GlyCosmos" id="A1CGC6">
    <property type="glycosylation" value="1 site, No reported glycans"/>
</dbReference>
<dbReference type="EnsemblFungi" id="EAW11006">
    <property type="protein sequence ID" value="EAW11006"/>
    <property type="gene ID" value="ACLA_066420"/>
</dbReference>
<dbReference type="GeneID" id="4704555"/>
<dbReference type="KEGG" id="act:ACLA_066420"/>
<dbReference type="VEuPathDB" id="FungiDB:ACLA_066420"/>
<dbReference type="eggNOG" id="ENOG502QS4Q">
    <property type="taxonomic scope" value="Eukaryota"/>
</dbReference>
<dbReference type="HOGENOM" id="CLU_031603_4_1_1"/>
<dbReference type="OMA" id="MNLGIDT"/>
<dbReference type="OrthoDB" id="406631at2759"/>
<dbReference type="Proteomes" id="UP000006701">
    <property type="component" value="Unassembled WGS sequence"/>
</dbReference>
<dbReference type="GO" id="GO:0005576">
    <property type="term" value="C:extracellular region"/>
    <property type="evidence" value="ECO:0007669"/>
    <property type="project" value="UniProtKB-SubCell"/>
</dbReference>
<dbReference type="GO" id="GO:0016985">
    <property type="term" value="F:mannan endo-1,4-beta-mannosidase activity"/>
    <property type="evidence" value="ECO:0007669"/>
    <property type="project" value="UniProtKB-EC"/>
</dbReference>
<dbReference type="GO" id="GO:0046355">
    <property type="term" value="P:mannan catabolic process"/>
    <property type="evidence" value="ECO:0007669"/>
    <property type="project" value="UniProtKB-ARBA"/>
</dbReference>
<dbReference type="FunFam" id="3.20.20.80:FF:000076">
    <property type="entry name" value="Mannan endo-1,4-beta-mannosidase A"/>
    <property type="match status" value="1"/>
</dbReference>
<dbReference type="Gene3D" id="3.20.20.80">
    <property type="entry name" value="Glycosidases"/>
    <property type="match status" value="1"/>
</dbReference>
<dbReference type="InterPro" id="IPR001547">
    <property type="entry name" value="Glyco_hydro_5"/>
</dbReference>
<dbReference type="InterPro" id="IPR017853">
    <property type="entry name" value="Glycoside_hydrolase_SF"/>
</dbReference>
<dbReference type="InterPro" id="IPR045053">
    <property type="entry name" value="MAN-like"/>
</dbReference>
<dbReference type="PANTHER" id="PTHR31451">
    <property type="match status" value="1"/>
</dbReference>
<dbReference type="PANTHER" id="PTHR31451:SF39">
    <property type="entry name" value="MANNAN ENDO-1,4-BETA-MANNOSIDASE 1"/>
    <property type="match status" value="1"/>
</dbReference>
<dbReference type="Pfam" id="PF00150">
    <property type="entry name" value="Cellulase"/>
    <property type="match status" value="1"/>
</dbReference>
<dbReference type="SUPFAM" id="SSF51445">
    <property type="entry name" value="(Trans)glycosidases"/>
    <property type="match status" value="1"/>
</dbReference>
<reference key="1">
    <citation type="journal article" date="2008" name="PLoS Genet.">
        <title>Genomic islands in the pathogenic filamentous fungus Aspergillus fumigatus.</title>
        <authorList>
            <person name="Fedorova N.D."/>
            <person name="Khaldi N."/>
            <person name="Joardar V.S."/>
            <person name="Maiti R."/>
            <person name="Amedeo P."/>
            <person name="Anderson M.J."/>
            <person name="Crabtree J."/>
            <person name="Silva J.C."/>
            <person name="Badger J.H."/>
            <person name="Albarraq A."/>
            <person name="Angiuoli S."/>
            <person name="Bussey H."/>
            <person name="Bowyer P."/>
            <person name="Cotty P.J."/>
            <person name="Dyer P.S."/>
            <person name="Egan A."/>
            <person name="Galens K."/>
            <person name="Fraser-Liggett C.M."/>
            <person name="Haas B.J."/>
            <person name="Inman J.M."/>
            <person name="Kent R."/>
            <person name="Lemieux S."/>
            <person name="Malavazi I."/>
            <person name="Orvis J."/>
            <person name="Roemer T."/>
            <person name="Ronning C.M."/>
            <person name="Sundaram J.P."/>
            <person name="Sutton G."/>
            <person name="Turner G."/>
            <person name="Venter J.C."/>
            <person name="White O.R."/>
            <person name="Whitty B.R."/>
            <person name="Youngman P."/>
            <person name="Wolfe K.H."/>
            <person name="Goldman G.H."/>
            <person name="Wortman J.R."/>
            <person name="Jiang B."/>
            <person name="Denning D.W."/>
            <person name="Nierman W.C."/>
        </authorList>
    </citation>
    <scope>NUCLEOTIDE SEQUENCE [LARGE SCALE GENOMIC DNA]</scope>
    <source>
        <strain>ATCC 1007 / CBS 513.65 / DSM 816 / NCTC 3887 / NRRL 1 / QM 1276 / 107</strain>
    </source>
</reference>
<proteinExistence type="inferred from homology"/>
<accession>A1CGC6</accession>